<evidence type="ECO:0000255" key="1">
    <source>
        <dbReference type="HAMAP-Rule" id="MF_01346"/>
    </source>
</evidence>
<name>ATPA_MESVI</name>
<feature type="chain" id="PRO_0000144381" description="ATP synthase subunit alpha, chloroplastic">
    <location>
        <begin position="1"/>
        <end position="505"/>
    </location>
</feature>
<feature type="binding site" evidence="1">
    <location>
        <begin position="170"/>
        <end position="177"/>
    </location>
    <ligand>
        <name>ATP</name>
        <dbReference type="ChEBI" id="CHEBI:30616"/>
    </ligand>
</feature>
<feature type="site" description="Required for activity" evidence="1">
    <location>
        <position position="363"/>
    </location>
</feature>
<reference key="1">
    <citation type="journal article" date="2000" name="Nature">
        <title>Ancestral chloroplast genome in Mesostigma viride reveals an early branch of green plant evolution.</title>
        <authorList>
            <person name="Lemieux C."/>
            <person name="Otis C."/>
            <person name="Turmel M."/>
        </authorList>
    </citation>
    <scope>NUCLEOTIDE SEQUENCE [LARGE SCALE GENOMIC DNA]</scope>
    <source>
        <strain>NIES-296 / KY-14 / CCMP 2046</strain>
    </source>
</reference>
<gene>
    <name evidence="1" type="primary">atpA</name>
</gene>
<comment type="function">
    <text>Produces ATP from ADP in the presence of a proton gradient across the membrane. The alpha chain is a regulatory subunit.</text>
</comment>
<comment type="catalytic activity">
    <reaction evidence="1">
        <text>ATP + H2O + 4 H(+)(in) = ADP + phosphate + 5 H(+)(out)</text>
        <dbReference type="Rhea" id="RHEA:57720"/>
        <dbReference type="ChEBI" id="CHEBI:15377"/>
        <dbReference type="ChEBI" id="CHEBI:15378"/>
        <dbReference type="ChEBI" id="CHEBI:30616"/>
        <dbReference type="ChEBI" id="CHEBI:43474"/>
        <dbReference type="ChEBI" id="CHEBI:456216"/>
        <dbReference type="EC" id="7.1.2.2"/>
    </reaction>
</comment>
<comment type="subunit">
    <text evidence="1">F-type ATPases have 2 components, CF(1) - the catalytic core - and CF(0) - the membrane proton channel. CF(1) has five subunits: alpha(3), beta(3), gamma(1), delta(1), epsilon(1). CF(0) has four main subunits: a, b, b' and c.</text>
</comment>
<comment type="subcellular location">
    <subcellularLocation>
        <location evidence="1">Plastid</location>
        <location evidence="1">Chloroplast thylakoid membrane</location>
        <topology evidence="1">Peripheral membrane protein</topology>
    </subcellularLocation>
</comment>
<comment type="similarity">
    <text evidence="1">Belongs to the ATPase alpha/beta chains family.</text>
</comment>
<keyword id="KW-0066">ATP synthesis</keyword>
<keyword id="KW-0067">ATP-binding</keyword>
<keyword id="KW-0139">CF(1)</keyword>
<keyword id="KW-0150">Chloroplast</keyword>
<keyword id="KW-0375">Hydrogen ion transport</keyword>
<keyword id="KW-0406">Ion transport</keyword>
<keyword id="KW-0472">Membrane</keyword>
<keyword id="KW-0547">Nucleotide-binding</keyword>
<keyword id="KW-0934">Plastid</keyword>
<keyword id="KW-0793">Thylakoid</keyword>
<keyword id="KW-1278">Translocase</keyword>
<keyword id="KW-0813">Transport</keyword>
<organism>
    <name type="scientific">Mesostigma viride</name>
    <name type="common">Green alga</name>
    <dbReference type="NCBI Taxonomy" id="41882"/>
    <lineage>
        <taxon>Eukaryota</taxon>
        <taxon>Viridiplantae</taxon>
        <taxon>Streptophyta</taxon>
        <taxon>Mesostigmatophyceae</taxon>
        <taxon>Mesostigmatales</taxon>
        <taxon>Mesostigmataceae</taxon>
        <taxon>Mesostigma</taxon>
    </lineage>
</organism>
<proteinExistence type="inferred from homology"/>
<geneLocation type="chloroplast"/>
<protein>
    <recommendedName>
        <fullName evidence="1">ATP synthase subunit alpha, chloroplastic</fullName>
        <ecNumber evidence="1">7.1.2.2</ecNumber>
    </recommendedName>
    <alternativeName>
        <fullName evidence="1">ATP synthase F1 sector subunit alpha</fullName>
    </alternativeName>
    <alternativeName>
        <fullName evidence="1">F-ATPase subunit alpha</fullName>
    </alternativeName>
</protein>
<dbReference type="EC" id="7.1.2.2" evidence="1"/>
<dbReference type="EMBL" id="AF166114">
    <property type="protein sequence ID" value="AAF43819.1"/>
    <property type="molecule type" value="Genomic_DNA"/>
</dbReference>
<dbReference type="RefSeq" id="NP_038378.1">
    <property type="nucleotide sequence ID" value="NC_002186.1"/>
</dbReference>
<dbReference type="SMR" id="Q9MUT2"/>
<dbReference type="GeneID" id="800980"/>
<dbReference type="GO" id="GO:0009535">
    <property type="term" value="C:chloroplast thylakoid membrane"/>
    <property type="evidence" value="ECO:0007669"/>
    <property type="project" value="UniProtKB-SubCell"/>
</dbReference>
<dbReference type="GO" id="GO:0045259">
    <property type="term" value="C:proton-transporting ATP synthase complex"/>
    <property type="evidence" value="ECO:0007669"/>
    <property type="project" value="UniProtKB-KW"/>
</dbReference>
<dbReference type="GO" id="GO:0043531">
    <property type="term" value="F:ADP binding"/>
    <property type="evidence" value="ECO:0007669"/>
    <property type="project" value="TreeGrafter"/>
</dbReference>
<dbReference type="GO" id="GO:0005524">
    <property type="term" value="F:ATP binding"/>
    <property type="evidence" value="ECO:0007669"/>
    <property type="project" value="UniProtKB-UniRule"/>
</dbReference>
<dbReference type="GO" id="GO:0046933">
    <property type="term" value="F:proton-transporting ATP synthase activity, rotational mechanism"/>
    <property type="evidence" value="ECO:0007669"/>
    <property type="project" value="UniProtKB-UniRule"/>
</dbReference>
<dbReference type="CDD" id="cd18113">
    <property type="entry name" value="ATP-synt_F1_alpha_C"/>
    <property type="match status" value="1"/>
</dbReference>
<dbReference type="CDD" id="cd18116">
    <property type="entry name" value="ATP-synt_F1_alpha_N"/>
    <property type="match status" value="1"/>
</dbReference>
<dbReference type="CDD" id="cd01132">
    <property type="entry name" value="F1-ATPase_alpha_CD"/>
    <property type="match status" value="1"/>
</dbReference>
<dbReference type="FunFam" id="1.20.150.20:FF:000001">
    <property type="entry name" value="ATP synthase subunit alpha"/>
    <property type="match status" value="1"/>
</dbReference>
<dbReference type="FunFam" id="2.40.30.20:FF:000001">
    <property type="entry name" value="ATP synthase subunit alpha"/>
    <property type="match status" value="1"/>
</dbReference>
<dbReference type="FunFam" id="3.40.50.300:FF:000002">
    <property type="entry name" value="ATP synthase subunit alpha"/>
    <property type="match status" value="1"/>
</dbReference>
<dbReference type="Gene3D" id="2.40.30.20">
    <property type="match status" value="1"/>
</dbReference>
<dbReference type="Gene3D" id="1.20.150.20">
    <property type="entry name" value="ATP synthase alpha/beta chain, C-terminal domain"/>
    <property type="match status" value="1"/>
</dbReference>
<dbReference type="Gene3D" id="3.40.50.300">
    <property type="entry name" value="P-loop containing nucleotide triphosphate hydrolases"/>
    <property type="match status" value="1"/>
</dbReference>
<dbReference type="HAMAP" id="MF_01346">
    <property type="entry name" value="ATP_synth_alpha_bact"/>
    <property type="match status" value="1"/>
</dbReference>
<dbReference type="InterPro" id="IPR023366">
    <property type="entry name" value="ATP_synth_asu-like_sf"/>
</dbReference>
<dbReference type="InterPro" id="IPR000793">
    <property type="entry name" value="ATP_synth_asu_C"/>
</dbReference>
<dbReference type="InterPro" id="IPR038376">
    <property type="entry name" value="ATP_synth_asu_C_sf"/>
</dbReference>
<dbReference type="InterPro" id="IPR033732">
    <property type="entry name" value="ATP_synth_F1_a_nt-bd_dom"/>
</dbReference>
<dbReference type="InterPro" id="IPR005294">
    <property type="entry name" value="ATP_synth_F1_asu"/>
</dbReference>
<dbReference type="InterPro" id="IPR020003">
    <property type="entry name" value="ATPase_a/bsu_AS"/>
</dbReference>
<dbReference type="InterPro" id="IPR004100">
    <property type="entry name" value="ATPase_F1/V1/A1_a/bsu_N"/>
</dbReference>
<dbReference type="InterPro" id="IPR036121">
    <property type="entry name" value="ATPase_F1/V1/A1_a/bsu_N_sf"/>
</dbReference>
<dbReference type="InterPro" id="IPR000194">
    <property type="entry name" value="ATPase_F1/V1/A1_a/bsu_nucl-bd"/>
</dbReference>
<dbReference type="InterPro" id="IPR027417">
    <property type="entry name" value="P-loop_NTPase"/>
</dbReference>
<dbReference type="NCBIfam" id="TIGR00962">
    <property type="entry name" value="atpA"/>
    <property type="match status" value="1"/>
</dbReference>
<dbReference type="NCBIfam" id="NF009884">
    <property type="entry name" value="PRK13343.1"/>
    <property type="match status" value="1"/>
</dbReference>
<dbReference type="PANTHER" id="PTHR48082">
    <property type="entry name" value="ATP SYNTHASE SUBUNIT ALPHA, MITOCHONDRIAL"/>
    <property type="match status" value="1"/>
</dbReference>
<dbReference type="PANTHER" id="PTHR48082:SF2">
    <property type="entry name" value="ATP SYNTHASE SUBUNIT ALPHA, MITOCHONDRIAL"/>
    <property type="match status" value="1"/>
</dbReference>
<dbReference type="Pfam" id="PF00006">
    <property type="entry name" value="ATP-synt_ab"/>
    <property type="match status" value="1"/>
</dbReference>
<dbReference type="Pfam" id="PF00306">
    <property type="entry name" value="ATP-synt_ab_C"/>
    <property type="match status" value="1"/>
</dbReference>
<dbReference type="Pfam" id="PF02874">
    <property type="entry name" value="ATP-synt_ab_N"/>
    <property type="match status" value="1"/>
</dbReference>
<dbReference type="PIRSF" id="PIRSF039088">
    <property type="entry name" value="F_ATPase_subunit_alpha"/>
    <property type="match status" value="1"/>
</dbReference>
<dbReference type="SUPFAM" id="SSF47917">
    <property type="entry name" value="C-terminal domain of alpha and beta subunits of F1 ATP synthase"/>
    <property type="match status" value="1"/>
</dbReference>
<dbReference type="SUPFAM" id="SSF50615">
    <property type="entry name" value="N-terminal domain of alpha and beta subunits of F1 ATP synthase"/>
    <property type="match status" value="1"/>
</dbReference>
<dbReference type="SUPFAM" id="SSF52540">
    <property type="entry name" value="P-loop containing nucleoside triphosphate hydrolases"/>
    <property type="match status" value="1"/>
</dbReference>
<dbReference type="PROSITE" id="PS00152">
    <property type="entry name" value="ATPASE_ALPHA_BETA"/>
    <property type="match status" value="1"/>
</dbReference>
<sequence length="505" mass="54167">MIKIQPEEISSVIRKQIEQYNQEVKVVNTGTVLQVGDGIARIYGLAKAMAGELLEFEDGTVGIALNLESNNVGAVLMGDGFSIQEGSRVKATGKIAQIPIGESYIGRVVDALARPIDGKGDIPSSETRLIESPAPGIISRRSVYEPLQTGLVSVDAMIPIGRGQRELIIGDRQTGKTAVAIDTILNQKGQNVICVYVAIGQKASSVAQVVSTLEENGAMAYTIIVAENANAPATLQYLAPYTGATLAEFFMYSGRHTLVIYDDLSKQAQAYREMSLLLRRPPGREAYPGDVFYLHSRLLERAAKLSNALGEGSMTALPIIETQAGDVAAYIPTNVISITDGQIFLSADLFNSGIRPAINVGISVSRVGSAAQIKAMKQVAGKLKLELAQFAELEAFAQFASDLDKATQNQLARGRRLRELLKQAQSSPLPVAQQVLTIYAGVNGYLDSIAIEDVKKFLAGLRNYVITSKAAIINNINSSKAVTPETEGMMKEAINEYKKVFAAGA</sequence>
<accession>Q9MUT2</accession>